<organism>
    <name type="scientific">Danio rerio</name>
    <name type="common">Zebrafish</name>
    <name type="synonym">Brachydanio rerio</name>
    <dbReference type="NCBI Taxonomy" id="7955"/>
    <lineage>
        <taxon>Eukaryota</taxon>
        <taxon>Metazoa</taxon>
        <taxon>Chordata</taxon>
        <taxon>Craniata</taxon>
        <taxon>Vertebrata</taxon>
        <taxon>Euteleostomi</taxon>
        <taxon>Actinopterygii</taxon>
        <taxon>Neopterygii</taxon>
        <taxon>Teleostei</taxon>
        <taxon>Ostariophysi</taxon>
        <taxon>Cypriniformes</taxon>
        <taxon>Danionidae</taxon>
        <taxon>Danioninae</taxon>
        <taxon>Danio</taxon>
    </lineage>
</organism>
<name>WDR81_DANRE</name>
<evidence type="ECO:0000250" key="1">
    <source>
        <dbReference type="UniProtKB" id="Q562E7"/>
    </source>
</evidence>
<evidence type="ECO:0000250" key="2">
    <source>
        <dbReference type="UniProtKB" id="Q5ND34"/>
    </source>
</evidence>
<evidence type="ECO:0000255" key="3"/>
<evidence type="ECO:0000255" key="4">
    <source>
        <dbReference type="PROSITE-ProRule" id="PRU00026"/>
    </source>
</evidence>
<evidence type="ECO:0000256" key="5">
    <source>
        <dbReference type="SAM" id="MobiDB-lite"/>
    </source>
</evidence>
<evidence type="ECO:0000269" key="6">
    <source>
    </source>
</evidence>
<evidence type="ECO:0000305" key="7"/>
<comment type="function">
    <text evidence="1 2">Functions as a negative regulator of the PI3 kinase/PI3K activity associated with endosomal membranes. By modifying the phosphatidylinositol 3-phosphate/PtdInsP3 content of endosomal membranes may regulate endosome fusion, recycling, sorting and early to late endosome transport. May also play a role in aggrephagy, the macroautophagic degradation of ubiquitinated protein aggregates. May also be involved in maintenance of normal mitochondrial structure and organization.</text>
</comment>
<comment type="subcellular location">
    <subcellularLocation>
        <location evidence="1">Early endosome membrane</location>
        <topology evidence="1">Peripheral membrane protein</topology>
    </subcellularLocation>
    <subcellularLocation>
        <location evidence="1">Late endosome membrane</location>
    </subcellularLocation>
    <subcellularLocation>
        <location evidence="1">Lysosome membrane</location>
    </subcellularLocation>
    <subcellularLocation>
        <location evidence="1">Cytoplasmic vesicle</location>
        <location evidence="1">Autophagosome membrane</location>
    </subcellularLocation>
    <subcellularLocation>
        <location evidence="1">Mitochondrion</location>
    </subcellularLocation>
    <subcellularLocation>
        <location evidence="1">Cytoplasm</location>
        <location evidence="1">Cytosol</location>
    </subcellularLocation>
</comment>
<comment type="tissue specificity">
    <text evidence="6">Widely expressed.</text>
</comment>
<comment type="developmental stage">
    <text evidence="6">Highly expressed at 5 and 15 hpf. Expression is higher in brain and eye. The expression drops after 72 hpf.</text>
</comment>
<comment type="similarity">
    <text evidence="7">Belongs to the WD repeat WDR81 family.</text>
</comment>
<keyword id="KW-0963">Cytoplasm</keyword>
<keyword id="KW-0968">Cytoplasmic vesicle</keyword>
<keyword id="KW-0967">Endosome</keyword>
<keyword id="KW-0458">Lysosome</keyword>
<keyword id="KW-0472">Membrane</keyword>
<keyword id="KW-0496">Mitochondrion</keyword>
<keyword id="KW-1185">Reference proteome</keyword>
<keyword id="KW-0677">Repeat</keyword>
<keyword id="KW-0809">Transit peptide</keyword>
<keyword id="KW-0853">WD repeat</keyword>
<feature type="chain" id="PRO_0000441869" description="WD repeat-containing protein 81">
    <location>
        <begin position="1"/>
        <end position="2065"/>
    </location>
</feature>
<feature type="domain" description="BEACH" evidence="4">
    <location>
        <begin position="325"/>
        <end position="617"/>
    </location>
</feature>
<feature type="repeat" description="WD 1" evidence="3">
    <location>
        <begin position="1767"/>
        <end position="1806"/>
    </location>
</feature>
<feature type="repeat" description="WD 2" evidence="3">
    <location>
        <begin position="1813"/>
        <end position="1853"/>
    </location>
</feature>
<feature type="repeat" description="WD 3" evidence="3">
    <location>
        <begin position="1906"/>
        <end position="1945"/>
    </location>
</feature>
<feature type="repeat" description="WD 4" evidence="3">
    <location>
        <begin position="1948"/>
        <end position="1986"/>
    </location>
</feature>
<feature type="repeat" description="WD 5" evidence="3">
    <location>
        <begin position="2035"/>
        <end position="2065"/>
    </location>
</feature>
<feature type="region of interest" description="Disordered" evidence="5">
    <location>
        <begin position="1082"/>
        <end position="1111"/>
    </location>
</feature>
<feature type="region of interest" description="Disordered" evidence="5">
    <location>
        <begin position="1156"/>
        <end position="1230"/>
    </location>
</feature>
<feature type="region of interest" description="Disordered" evidence="5">
    <location>
        <begin position="1271"/>
        <end position="1290"/>
    </location>
</feature>
<feature type="region of interest" description="Disordered" evidence="5">
    <location>
        <begin position="1595"/>
        <end position="1642"/>
    </location>
</feature>
<feature type="compositionally biased region" description="Gly residues" evidence="5">
    <location>
        <begin position="1101"/>
        <end position="1111"/>
    </location>
</feature>
<feature type="compositionally biased region" description="Polar residues" evidence="5">
    <location>
        <begin position="1156"/>
        <end position="1169"/>
    </location>
</feature>
<feature type="compositionally biased region" description="Acidic residues" evidence="5">
    <location>
        <begin position="1213"/>
        <end position="1228"/>
    </location>
</feature>
<feature type="compositionally biased region" description="Low complexity" evidence="5">
    <location>
        <begin position="1624"/>
        <end position="1637"/>
    </location>
</feature>
<proteinExistence type="evidence at transcript level"/>
<dbReference type="EMBL" id="CU861670">
    <property type="status" value="NOT_ANNOTATED_CDS"/>
    <property type="molecule type" value="Genomic_DNA"/>
</dbReference>
<dbReference type="RefSeq" id="NP_001411020.1">
    <property type="nucleotide sequence ID" value="NM_001424091.1"/>
</dbReference>
<dbReference type="RefSeq" id="XP_002664681.1">
    <property type="nucleotide sequence ID" value="XM_002664635.4"/>
</dbReference>
<dbReference type="RefSeq" id="XP_005157714.1">
    <property type="nucleotide sequence ID" value="XM_005157657.3"/>
</dbReference>
<dbReference type="RefSeq" id="XP_068069541.1">
    <property type="nucleotide sequence ID" value="XM_068213440.1"/>
</dbReference>
<dbReference type="SMR" id="E7FEV0"/>
<dbReference type="FunCoup" id="E7FEV0">
    <property type="interactions" value="1374"/>
</dbReference>
<dbReference type="STRING" id="7955.ENSDARP00000129633"/>
<dbReference type="PaxDb" id="7955-ENSDARP00000129633"/>
<dbReference type="PeptideAtlas" id="E7FEV0"/>
<dbReference type="Ensembl" id="ENSDART00000156621">
    <property type="protein sequence ID" value="ENSDARP00000129633"/>
    <property type="gene ID" value="ENSDARG00000079702"/>
</dbReference>
<dbReference type="Ensembl" id="ENSDART00000182609">
    <property type="protein sequence ID" value="ENSDARP00000151363"/>
    <property type="gene ID" value="ENSDARG00000079702"/>
</dbReference>
<dbReference type="GeneID" id="100333062"/>
<dbReference type="eggNOG" id="KOG1786">
    <property type="taxonomic scope" value="Eukaryota"/>
</dbReference>
<dbReference type="eggNOG" id="KOG4190">
    <property type="taxonomic scope" value="Eukaryota"/>
</dbReference>
<dbReference type="HOGENOM" id="CLU_001454_0_0_1"/>
<dbReference type="InParanoid" id="E7FEV0"/>
<dbReference type="OMA" id="AYEQFTP"/>
<dbReference type="OrthoDB" id="29306at2759"/>
<dbReference type="PhylomeDB" id="E7FEV0"/>
<dbReference type="TreeFam" id="TF323353"/>
<dbReference type="PRO" id="PR:E7FEV0"/>
<dbReference type="Proteomes" id="UP000000437">
    <property type="component" value="Chromosome 15"/>
</dbReference>
<dbReference type="Bgee" id="ENSDARG00000079702">
    <property type="expression patterns" value="Expressed in white matter and 42 other cell types or tissues"/>
</dbReference>
<dbReference type="GO" id="GO:0000421">
    <property type="term" value="C:autophagosome membrane"/>
    <property type="evidence" value="ECO:0000250"/>
    <property type="project" value="UniProtKB"/>
</dbReference>
<dbReference type="GO" id="GO:0005829">
    <property type="term" value="C:cytosol"/>
    <property type="evidence" value="ECO:0000250"/>
    <property type="project" value="UniProtKB"/>
</dbReference>
<dbReference type="GO" id="GO:0031901">
    <property type="term" value="C:early endosome membrane"/>
    <property type="evidence" value="ECO:0000250"/>
    <property type="project" value="UniProtKB"/>
</dbReference>
<dbReference type="GO" id="GO:0010008">
    <property type="term" value="C:endosome membrane"/>
    <property type="evidence" value="ECO:0000250"/>
    <property type="project" value="UniProtKB"/>
</dbReference>
<dbReference type="GO" id="GO:0031902">
    <property type="term" value="C:late endosome membrane"/>
    <property type="evidence" value="ECO:0000250"/>
    <property type="project" value="UniProtKB"/>
</dbReference>
<dbReference type="GO" id="GO:0005765">
    <property type="term" value="C:lysosomal membrane"/>
    <property type="evidence" value="ECO:0007669"/>
    <property type="project" value="UniProtKB-SubCell"/>
</dbReference>
<dbReference type="GO" id="GO:0005739">
    <property type="term" value="C:mitochondrion"/>
    <property type="evidence" value="ECO:0000318"/>
    <property type="project" value="GO_Central"/>
</dbReference>
<dbReference type="GO" id="GO:0141039">
    <property type="term" value="F:phosphatidylinositol 3-kinase inhibitor activity"/>
    <property type="evidence" value="ECO:0000250"/>
    <property type="project" value="UniProtKB"/>
</dbReference>
<dbReference type="GO" id="GO:0035014">
    <property type="term" value="F:phosphatidylinositol 3-kinase regulator activity"/>
    <property type="evidence" value="ECO:0000318"/>
    <property type="project" value="GO_Central"/>
</dbReference>
<dbReference type="GO" id="GO:0035973">
    <property type="term" value="P:aggrephagy"/>
    <property type="evidence" value="ECO:0000250"/>
    <property type="project" value="UniProtKB"/>
</dbReference>
<dbReference type="GO" id="GO:0045022">
    <property type="term" value="P:early endosome to late endosome transport"/>
    <property type="evidence" value="ECO:0000250"/>
    <property type="project" value="UniProtKB"/>
</dbReference>
<dbReference type="GO" id="GO:0006511">
    <property type="term" value="P:ubiquitin-dependent protein catabolic process"/>
    <property type="evidence" value="ECO:0000250"/>
    <property type="project" value="UniProtKB"/>
</dbReference>
<dbReference type="CDD" id="cd06071">
    <property type="entry name" value="Beach"/>
    <property type="match status" value="1"/>
</dbReference>
<dbReference type="FunFam" id="2.130.10.10:FF:000355">
    <property type="entry name" value="WD repeat-containing protein 81 isoform X1"/>
    <property type="match status" value="1"/>
</dbReference>
<dbReference type="Gene3D" id="1.10.1540.10">
    <property type="entry name" value="BEACH domain"/>
    <property type="match status" value="1"/>
</dbReference>
<dbReference type="Gene3D" id="2.130.10.10">
    <property type="entry name" value="YVTN repeat-like/Quinoprotein amine dehydrogenase"/>
    <property type="match status" value="2"/>
</dbReference>
<dbReference type="InterPro" id="IPR000409">
    <property type="entry name" value="BEACH_dom"/>
</dbReference>
<dbReference type="InterPro" id="IPR036372">
    <property type="entry name" value="BEACH_dom_sf"/>
</dbReference>
<dbReference type="InterPro" id="IPR015943">
    <property type="entry name" value="WD40/YVTN_repeat-like_dom_sf"/>
</dbReference>
<dbReference type="InterPro" id="IPR036322">
    <property type="entry name" value="WD40_repeat_dom_sf"/>
</dbReference>
<dbReference type="InterPro" id="IPR001680">
    <property type="entry name" value="WD40_rpt"/>
</dbReference>
<dbReference type="InterPro" id="IPR052651">
    <property type="entry name" value="WDR81"/>
</dbReference>
<dbReference type="PANTHER" id="PTHR44662">
    <property type="entry name" value="WD REPEAT-CONTAINING PROTEIN 81"/>
    <property type="match status" value="1"/>
</dbReference>
<dbReference type="PANTHER" id="PTHR44662:SF1">
    <property type="entry name" value="WD REPEAT-CONTAINING PROTEIN 81"/>
    <property type="match status" value="1"/>
</dbReference>
<dbReference type="Pfam" id="PF02138">
    <property type="entry name" value="Beach"/>
    <property type="match status" value="1"/>
</dbReference>
<dbReference type="Pfam" id="PF00400">
    <property type="entry name" value="WD40"/>
    <property type="match status" value="1"/>
</dbReference>
<dbReference type="SMART" id="SM01026">
    <property type="entry name" value="Beach"/>
    <property type="match status" value="1"/>
</dbReference>
<dbReference type="SMART" id="SM00320">
    <property type="entry name" value="WD40"/>
    <property type="match status" value="7"/>
</dbReference>
<dbReference type="SUPFAM" id="SSF81837">
    <property type="entry name" value="BEACH domain"/>
    <property type="match status" value="1"/>
</dbReference>
<dbReference type="SUPFAM" id="SSF50978">
    <property type="entry name" value="WD40 repeat-like"/>
    <property type="match status" value="1"/>
</dbReference>
<dbReference type="PROSITE" id="PS50197">
    <property type="entry name" value="BEACH"/>
    <property type="match status" value="1"/>
</dbReference>
<dbReference type="PROSITE" id="PS50082">
    <property type="entry name" value="WD_REPEATS_2"/>
    <property type="match status" value="1"/>
</dbReference>
<dbReference type="PROSITE" id="PS50294">
    <property type="entry name" value="WD_REPEATS_REGION"/>
    <property type="match status" value="1"/>
</dbReference>
<sequence length="2065" mass="228484">MEWLAPALERDLGIDQRQTAHSQRPNELVVLVPTRWVMALRNKRVTRCAKYESFSEGEICTLLQRSQMKLPSGWTRVCIQGLRKRKLGYRFARETGCHGEGLSQDSFMTLMQGVSQSNFRNLWHEAYMTHVQPYADSVEQTPVLALDAVRQALQKLFCSNFISTDRVSPSLSPAKEKEKDCPFLSTCSAPKQSTESLCPNVLPAECLLESEEVLYVVFPYTQYTVHDIVTYSPAKLANSNAKILFILYQLLIAMRECHASGLLCGELSLLDIAVDEQLCSRLKISLAHYEKFKEYRDAVPYALQNKVPMSVSTKDNHNNGVSGQLCRNCQDELKSLVLDWVNGQVSNFQYLMELNRLAGRREGDPNYHPVLPWVVDFTVPYGRFRDLKKSKFRLNKGDKQLDFTYEMTKEALAAVSGSGGSNYPPDLGGPVVPGGPGQSDHLHVPHHISDVLSDITYYVYKARQTPKSVLCSHVRSQWEPNEYPASMERIQSWTPDECIPEFYRDPSIFRSIHPDMPDLDVPPWCNSYEEFIAVHRQLLESREVSQQLHHWIDLTFGYKLSGKEAIKAKNVCLHLVDNHTHLTSYGVVQLFDHPHPPRLALYQYAPPEPPHFGRVNVTTWQIPPLETTMDGVDGLVPEATGCESSGWSVVGRDEELEQAIEALDLSGSSSSTSASVSIPVVGSAAGKTSGETIGLVVSPSHGSFPGEATGNVTNTLGSGIRTAMLHRAASVSKKPEASNLEDFKISLPDGFKPLQPLEELEKLNTFLVKGLHSEIEHTMDLGINKKDLRSVPKVPLSFTDLFQRDMQALGVLIAEIFYSSKLRGLRPETHLRDRFQAVLKLCSTNLRDVPLPLHHALDTLLQVHKHCLKTETIIMHPQGLPFLFKYDPICEGLPPPNPWQLLSPIVSPLPFPEYFPTLHKFIFSYHSKMESINNIQGRDIVFNLWQQLETLLKGDITTEGLEILLPFVLSLMSEESTAVYAAWYLFEPVSRVLGPRNASKYLIKPLVGVYENPRCLRGRFYLYTDCFVLQLIVRLGLQVFLSSLLPHVLQVMTGFESCNTAAGTEWEGMKVLRGAAGALDEEEEEYECDDRRSSNATSSGKVGGGSGGGSGGVGVVGDQGLVDYSSGISLNDQVFLNEGEDFQNGFYVNNSASGATTVGTKQQNQSTANKDQDQESLSVGKLSDKSSASEVSIGDRASLKSADSSQDLKQASDGEDGGELEDEEETVEDREITVQRVPSLEMTLSVCTEESEATVATLEGDVMNGIVQEDGEKNMEEEETEHDPLEDSEEKEHKILLDTVCKTVRWLSAKLGPTLTSRFIARNLLRLLTSCYIGLDKHQFMLSVNEENSLECVGSVYEKKPVVGDQTARPVLECLIYIAHLYGEPVLTYQYLPYIGYLVSPPSSCRLNTRKEAGLLGAVVLTQKIIVFLSDTTLMDMLMKINQEVLLPLLDLLTSTKMGFPSGVQTRSAVCLKTLSLMALICLRIGREMVQQHMAETLSRFFQVFSLLQFLQNQIGSAPRREVAECTYLDLRIPDGAELTIELGVLEELQAVFNPEMAYASYIPFYCLIGDSGIRKLVTNHELVWSLAQSYHERASPGSPESNPVGGQRASAVGLSPSMGRQMSRSPFPAPSSTSTPLGGDILPESGTFGSHLVGNRIQVTRDTEACGSPNLSSLETWTHGRPYGSNAPPMSLATTALSSAGPSFSHSSYSWVMGPTPEDSALKQDLPRSSRSLQGNWLAYWQYEIGLNQQDSHFHFHQIRLQSFIGHSGTAKCLAPLAGEDYFLSGSKDKTVRLWPLYNHGDGTREVEPRLTYTEHRKSIFYVGQLEALQEVVSCDGTVHLWDQFTGKNIRCNEPLDGKNPITAVTTMPAPHCSVVFASADSVLRFIDPRKPGLQHEFRLAYSNLSAGLIRCLAVSPGGRTIAAGFSTGFIVLLDARTGLVLRGWPGHEGDILQMKAAEGNLLVSSSSDHTLTVWKDVEHKPLHQYRTPSDPIHAFDLYGAEIVAGTVANKIGVYSILDSTASLAGSTKLSTENFRGTLTSLSVLPTKRLLLLGSDNGAIRLLA</sequence>
<protein>
    <recommendedName>
        <fullName evidence="1">WD repeat-containing protein 81</fullName>
    </recommendedName>
</protein>
<reference key="1">
    <citation type="journal article" date="2013" name="Nature">
        <title>The zebrafish reference genome sequence and its relationship to the human genome.</title>
        <authorList>
            <person name="Howe K."/>
            <person name="Clark M.D."/>
            <person name="Torroja C.F."/>
            <person name="Torrance J."/>
            <person name="Berthelot C."/>
            <person name="Muffato M."/>
            <person name="Collins J.E."/>
            <person name="Humphray S."/>
            <person name="McLaren K."/>
            <person name="Matthews L."/>
            <person name="McLaren S."/>
            <person name="Sealy I."/>
            <person name="Caccamo M."/>
            <person name="Churcher C."/>
            <person name="Scott C."/>
            <person name="Barrett J.C."/>
            <person name="Koch R."/>
            <person name="Rauch G.J."/>
            <person name="White S."/>
            <person name="Chow W."/>
            <person name="Kilian B."/>
            <person name="Quintais L.T."/>
            <person name="Guerra-Assuncao J.A."/>
            <person name="Zhou Y."/>
            <person name="Gu Y."/>
            <person name="Yen J."/>
            <person name="Vogel J.H."/>
            <person name="Eyre T."/>
            <person name="Redmond S."/>
            <person name="Banerjee R."/>
            <person name="Chi J."/>
            <person name="Fu B."/>
            <person name="Langley E."/>
            <person name="Maguire S.F."/>
            <person name="Laird G.K."/>
            <person name="Lloyd D."/>
            <person name="Kenyon E."/>
            <person name="Donaldson S."/>
            <person name="Sehra H."/>
            <person name="Almeida-King J."/>
            <person name="Loveland J."/>
            <person name="Trevanion S."/>
            <person name="Jones M."/>
            <person name="Quail M."/>
            <person name="Willey D."/>
            <person name="Hunt A."/>
            <person name="Burton J."/>
            <person name="Sims S."/>
            <person name="McLay K."/>
            <person name="Plumb B."/>
            <person name="Davis J."/>
            <person name="Clee C."/>
            <person name="Oliver K."/>
            <person name="Clark R."/>
            <person name="Riddle C."/>
            <person name="Elliot D."/>
            <person name="Threadgold G."/>
            <person name="Harden G."/>
            <person name="Ware D."/>
            <person name="Begum S."/>
            <person name="Mortimore B."/>
            <person name="Kerry G."/>
            <person name="Heath P."/>
            <person name="Phillimore B."/>
            <person name="Tracey A."/>
            <person name="Corby N."/>
            <person name="Dunn M."/>
            <person name="Johnson C."/>
            <person name="Wood J."/>
            <person name="Clark S."/>
            <person name="Pelan S."/>
            <person name="Griffiths G."/>
            <person name="Smith M."/>
            <person name="Glithero R."/>
            <person name="Howden P."/>
            <person name="Barker N."/>
            <person name="Lloyd C."/>
            <person name="Stevens C."/>
            <person name="Harley J."/>
            <person name="Holt K."/>
            <person name="Panagiotidis G."/>
            <person name="Lovell J."/>
            <person name="Beasley H."/>
            <person name="Henderson C."/>
            <person name="Gordon D."/>
            <person name="Auger K."/>
            <person name="Wright D."/>
            <person name="Collins J."/>
            <person name="Raisen C."/>
            <person name="Dyer L."/>
            <person name="Leung K."/>
            <person name="Robertson L."/>
            <person name="Ambridge K."/>
            <person name="Leongamornlert D."/>
            <person name="McGuire S."/>
            <person name="Gilderthorp R."/>
            <person name="Griffiths C."/>
            <person name="Manthravadi D."/>
            <person name="Nichol S."/>
            <person name="Barker G."/>
            <person name="Whitehead S."/>
            <person name="Kay M."/>
            <person name="Brown J."/>
            <person name="Murnane C."/>
            <person name="Gray E."/>
            <person name="Humphries M."/>
            <person name="Sycamore N."/>
            <person name="Barker D."/>
            <person name="Saunders D."/>
            <person name="Wallis J."/>
            <person name="Babbage A."/>
            <person name="Hammond S."/>
            <person name="Mashreghi-Mohammadi M."/>
            <person name="Barr L."/>
            <person name="Martin S."/>
            <person name="Wray P."/>
            <person name="Ellington A."/>
            <person name="Matthews N."/>
            <person name="Ellwood M."/>
            <person name="Woodmansey R."/>
            <person name="Clark G."/>
            <person name="Cooper J."/>
            <person name="Tromans A."/>
            <person name="Grafham D."/>
            <person name="Skuce C."/>
            <person name="Pandian R."/>
            <person name="Andrews R."/>
            <person name="Harrison E."/>
            <person name="Kimberley A."/>
            <person name="Garnett J."/>
            <person name="Fosker N."/>
            <person name="Hall R."/>
            <person name="Garner P."/>
            <person name="Kelly D."/>
            <person name="Bird C."/>
            <person name="Palmer S."/>
            <person name="Gehring I."/>
            <person name="Berger A."/>
            <person name="Dooley C.M."/>
            <person name="Ersan-Urun Z."/>
            <person name="Eser C."/>
            <person name="Geiger H."/>
            <person name="Geisler M."/>
            <person name="Karotki L."/>
            <person name="Kirn A."/>
            <person name="Konantz J."/>
            <person name="Konantz M."/>
            <person name="Oberlander M."/>
            <person name="Rudolph-Geiger S."/>
            <person name="Teucke M."/>
            <person name="Lanz C."/>
            <person name="Raddatz G."/>
            <person name="Osoegawa K."/>
            <person name="Zhu B."/>
            <person name="Rapp A."/>
            <person name="Widaa S."/>
            <person name="Langford C."/>
            <person name="Yang F."/>
            <person name="Schuster S.C."/>
            <person name="Carter N.P."/>
            <person name="Harrow J."/>
            <person name="Ning Z."/>
            <person name="Herrero J."/>
            <person name="Searle S.M."/>
            <person name="Enright A."/>
            <person name="Geisler R."/>
            <person name="Plasterk R.H."/>
            <person name="Lee C."/>
            <person name="Westerfield M."/>
            <person name="de Jong P.J."/>
            <person name="Zon L.I."/>
            <person name="Postlethwait J.H."/>
            <person name="Nusslein-Volhard C."/>
            <person name="Hubbard T.J."/>
            <person name="Roest Crollius H."/>
            <person name="Rogers J."/>
            <person name="Stemple D.L."/>
        </authorList>
    </citation>
    <scope>NUCLEOTIDE SEQUENCE [LARGE SCALE GENOMIC DNA]</scope>
    <source>
        <strain>Tuebingen</strain>
    </source>
</reference>
<reference key="2">
    <citation type="journal article" date="2015" name="BMC Neurosci.">
        <title>Characterization of a novel zebrafish (Danio rerio) gene, wdr81, associated with cerebellar ataxia, mental retardation and dysequilibrium syndrome (CAMRQ).</title>
        <authorList>
            <person name="Doldur-Balli F."/>
            <person name="Ozel M.N."/>
            <person name="Gulsuner S."/>
            <person name="Tekinay A.B."/>
            <person name="Ozcelik T."/>
            <person name="Konu O."/>
            <person name="Adams M.M."/>
        </authorList>
    </citation>
    <scope>TISSUE SPECIFICITY</scope>
    <scope>DEVELOPMENTAL STAGE</scope>
</reference>
<gene>
    <name type="primary">wdr81</name>
</gene>
<accession>E7FEV0</accession>